<comment type="function">
    <text evidence="5 6 7 8 9 10">Acts as a negative regulator of seedling photomorphogenesis and light-regulated inhibition of hypocotyl elongation (PubMed:17605755, PubMed:18540109, PubMed:21685177). BBX24/STO and BBX25/STH function as transcriptional corepressors of HY5 activity, leading to the down-regulation of BBX22 expression. BBX24/STO acts additively with BBX25/STH during de-etiolation and the hypocotyl shade avoidance response (PubMed:23624715). Functions as a negative regulator of photomorphogenic UV-B responses by interacting with both COP1 and HY5 (PubMed:22410790). May act as a transcription factor in the salt-stress response (PubMed:12909688).</text>
</comment>
<comment type="subunit">
    <text evidence="3 4 5 8 9 11">Interacts with COP1 WD40 domain (PubMed:11226162, PubMed:21685177, PubMed:22410790). Interacts with HY5 (PubMed:22410790, PubMed:23733077) and HYH (PubMed:23733077). Interacts with RCD1 and TRP4 (PubMed:11018516, PubMed:12909688).</text>
</comment>
<comment type="interaction">
    <interactant intactId="EBI-631943">
        <id>Q96288</id>
    </interactant>
    <interactant intactId="EBI-15191793">
        <id>O82617</id>
        <label>BBX23</label>
    </interactant>
    <organismsDiffer>false</organismsDiffer>
    <experiments>3</experiments>
</comment>
<comment type="interaction">
    <interactant intactId="EBI-631943">
        <id>Q96288</id>
    </interactant>
    <interactant intactId="EBI-15192709">
        <id>Q6NLH4</id>
        <label>BBX29</label>
    </interactant>
    <organismsDiffer>false</organismsDiffer>
    <experiments>4</experiments>
</comment>
<comment type="interaction">
    <interactant intactId="EBI-631943">
        <id>Q96288</id>
    </interactant>
    <interactant intactId="EBI-2118043">
        <id>Q8RY59</id>
        <label>RCD1</label>
    </interactant>
    <organismsDiffer>false</organismsDiffer>
    <experiments>4</experiments>
</comment>
<comment type="subcellular location">
    <subcellularLocation>
        <location evidence="5 6 8">Nucleus</location>
    </subcellularLocation>
</comment>
<comment type="alternative products">
    <event type="alternative splicing"/>
    <isoform>
        <id>Q96288-1</id>
        <name>1</name>
        <sequence type="displayed"/>
    </isoform>
    <text>A number of isoforms are produced. According to EST sequences.</text>
</comment>
<comment type="tissue specificity">
    <text>High expression in leaves and lower in roots and flowers.</text>
</comment>
<comment type="induction">
    <text evidence="6">Circadian regulation with a peak before dawn.</text>
</comment>
<comment type="PTM">
    <text evidence="13">COP1-mediated ubiquitination and subsequent proteasomal degradation of BBX24/STO occurs in the dark.</text>
</comment>
<comment type="disruption phenotype">
    <text evidence="6 9">No visible phenotype under normal growth conditions, but mutant seedlings show reduction of hypocotyls length when grown under continuous blue light and a short primary root phenotype under UV-B radiation.</text>
</comment>
<comment type="miscellaneous">
    <text evidence="5">BBX24/STO expression is not changed in plants treated with increasing salt concentrations.</text>
</comment>
<name>BBX24_ARATH</name>
<accession>Q96288</accession>
<sequence length="248" mass="27641">MKIQCDVCEKAPATVICCADEAALCPQCDIEIHAANKLASKHQRLHLNSLSTKFPRCDICQEKAAFIFCVEDRALLCRDCDESIHVANSRSANHQRFLATGIKVALTSTICSKEIEKNQPEPSNNQQKANQIPAKSTSQQQQQPSSATPLPWAVDDFFHFSDIESTDKKGQLDLGAGELDWFSDMGFFGDQINDKALPAAEVPELSVSHLGHVHSYKPMKSNVSHKKPRFETRYDDDDEEHFIVPDLG</sequence>
<dbReference type="EMBL" id="X95572">
    <property type="protein sequence ID" value="CAA64819.1"/>
    <property type="molecule type" value="mRNA"/>
</dbReference>
<dbReference type="EMBL" id="AC024174">
    <property type="protein sequence ID" value="AAF80128.1"/>
    <property type="molecule type" value="Genomic_DNA"/>
</dbReference>
<dbReference type="EMBL" id="CP002684">
    <property type="protein sequence ID" value="AEE27933.1"/>
    <property type="molecule type" value="Genomic_DNA"/>
</dbReference>
<dbReference type="EMBL" id="AY079377">
    <property type="protein sequence ID" value="AAL85108.1"/>
    <property type="molecule type" value="mRNA"/>
</dbReference>
<dbReference type="EMBL" id="AY045794">
    <property type="protein sequence ID" value="AAK76468.1"/>
    <property type="molecule type" value="mRNA"/>
</dbReference>
<dbReference type="PIR" id="E86195">
    <property type="entry name" value="E86195"/>
</dbReference>
<dbReference type="RefSeq" id="NP_172094.1">
    <molecule id="Q96288-1"/>
    <property type="nucleotide sequence ID" value="NM_100484.4"/>
</dbReference>
<dbReference type="PDB" id="6QTU">
    <property type="method" value="X-ray"/>
    <property type="resolution" value="1.30 A"/>
    <property type="chains" value="B=240-248"/>
</dbReference>
<dbReference type="PDBsum" id="6QTU"/>
<dbReference type="SMR" id="Q96288"/>
<dbReference type="BioGRID" id="22355">
    <property type="interactions" value="16"/>
</dbReference>
<dbReference type="FunCoup" id="Q96288">
    <property type="interactions" value="481"/>
</dbReference>
<dbReference type="IntAct" id="Q96288">
    <property type="interactions" value="12"/>
</dbReference>
<dbReference type="MINT" id="Q96288"/>
<dbReference type="STRING" id="3702.Q96288"/>
<dbReference type="PaxDb" id="3702-AT1G06040.1"/>
<dbReference type="ProteomicsDB" id="240849">
    <molecule id="Q96288-1"/>
</dbReference>
<dbReference type="EnsemblPlants" id="AT1G06040.1">
    <molecule id="Q96288-1"/>
    <property type="protein sequence ID" value="AT1G06040.1"/>
    <property type="gene ID" value="AT1G06040"/>
</dbReference>
<dbReference type="GeneID" id="837113"/>
<dbReference type="Gramene" id="AT1G06040.1">
    <molecule id="Q96288-1"/>
    <property type="protein sequence ID" value="AT1G06040.1"/>
    <property type="gene ID" value="AT1G06040"/>
</dbReference>
<dbReference type="KEGG" id="ath:AT1G06040"/>
<dbReference type="Araport" id="AT1G06040"/>
<dbReference type="TAIR" id="AT1G06040">
    <property type="gene designation" value="STO"/>
</dbReference>
<dbReference type="eggNOG" id="ENOG502QQIU">
    <property type="taxonomic scope" value="Eukaryota"/>
</dbReference>
<dbReference type="HOGENOM" id="CLU_025298_3_0_1"/>
<dbReference type="InParanoid" id="Q96288"/>
<dbReference type="OrthoDB" id="153872at2759"/>
<dbReference type="PhylomeDB" id="Q96288"/>
<dbReference type="PRO" id="PR:Q96288"/>
<dbReference type="Proteomes" id="UP000006548">
    <property type="component" value="Chromosome 1"/>
</dbReference>
<dbReference type="ExpressionAtlas" id="Q96288">
    <property type="expression patterns" value="baseline and differential"/>
</dbReference>
<dbReference type="GO" id="GO:0005634">
    <property type="term" value="C:nucleus"/>
    <property type="evidence" value="ECO:0000314"/>
    <property type="project" value="TAIR"/>
</dbReference>
<dbReference type="GO" id="GO:0003677">
    <property type="term" value="F:DNA binding"/>
    <property type="evidence" value="ECO:0000250"/>
    <property type="project" value="TAIR"/>
</dbReference>
<dbReference type="GO" id="GO:0003700">
    <property type="term" value="F:DNA-binding transcription factor activity"/>
    <property type="evidence" value="ECO:0000250"/>
    <property type="project" value="TAIR"/>
</dbReference>
<dbReference type="GO" id="GO:0003712">
    <property type="term" value="F:transcription coregulator activity"/>
    <property type="evidence" value="ECO:0000314"/>
    <property type="project" value="TAIR"/>
</dbReference>
<dbReference type="GO" id="GO:0008270">
    <property type="term" value="F:zinc ion binding"/>
    <property type="evidence" value="ECO:0007669"/>
    <property type="project" value="UniProtKB-KW"/>
</dbReference>
<dbReference type="GO" id="GO:0048573">
    <property type="term" value="P:photoperiodism, flowering"/>
    <property type="evidence" value="ECO:0000315"/>
    <property type="project" value="TAIR"/>
</dbReference>
<dbReference type="GO" id="GO:1902448">
    <property type="term" value="P:positive regulation of shade avoidance"/>
    <property type="evidence" value="ECO:0000316"/>
    <property type="project" value="TAIR"/>
</dbReference>
<dbReference type="GO" id="GO:0009416">
    <property type="term" value="P:response to light stimulus"/>
    <property type="evidence" value="ECO:0000270"/>
    <property type="project" value="TAIR"/>
</dbReference>
<dbReference type="GO" id="GO:0090351">
    <property type="term" value="P:seedling development"/>
    <property type="evidence" value="ECO:0000316"/>
    <property type="project" value="TAIR"/>
</dbReference>
<dbReference type="GO" id="GO:0010228">
    <property type="term" value="P:vegetative to reproductive phase transition of meristem"/>
    <property type="evidence" value="ECO:0000315"/>
    <property type="project" value="TAIR"/>
</dbReference>
<dbReference type="CDD" id="cd19821">
    <property type="entry name" value="Bbox1_BBX-like"/>
    <property type="match status" value="2"/>
</dbReference>
<dbReference type="Gene3D" id="3.30.160.60">
    <property type="entry name" value="Classic Zinc Finger"/>
    <property type="match status" value="1"/>
</dbReference>
<dbReference type="InterPro" id="IPR051979">
    <property type="entry name" value="B-box_zinc_finger"/>
</dbReference>
<dbReference type="InterPro" id="IPR049808">
    <property type="entry name" value="CONSTANS-like_Bbox1"/>
</dbReference>
<dbReference type="InterPro" id="IPR000315">
    <property type="entry name" value="Znf_B-box"/>
</dbReference>
<dbReference type="PANTHER" id="PTHR31832">
    <property type="entry name" value="B-BOX ZINC FINGER PROTEIN 22"/>
    <property type="match status" value="1"/>
</dbReference>
<dbReference type="PANTHER" id="PTHR31832:SF41">
    <property type="entry name" value="B-BOX ZINC FINGER PROTEIN 24"/>
    <property type="match status" value="1"/>
</dbReference>
<dbReference type="Pfam" id="PF00643">
    <property type="entry name" value="zf-B_box"/>
    <property type="match status" value="2"/>
</dbReference>
<dbReference type="SMART" id="SM00336">
    <property type="entry name" value="BBOX"/>
    <property type="match status" value="2"/>
</dbReference>
<dbReference type="PROSITE" id="PS50119">
    <property type="entry name" value="ZF_BBOX"/>
    <property type="match status" value="2"/>
</dbReference>
<evidence type="ECO:0000255" key="1">
    <source>
        <dbReference type="PROSITE-ProRule" id="PRU00024"/>
    </source>
</evidence>
<evidence type="ECO:0000256" key="2">
    <source>
        <dbReference type="SAM" id="MobiDB-lite"/>
    </source>
</evidence>
<evidence type="ECO:0000269" key="3">
    <source>
    </source>
</evidence>
<evidence type="ECO:0000269" key="4">
    <source>
    </source>
</evidence>
<evidence type="ECO:0000269" key="5">
    <source>
    </source>
</evidence>
<evidence type="ECO:0000269" key="6">
    <source>
    </source>
</evidence>
<evidence type="ECO:0000269" key="7">
    <source>
    </source>
</evidence>
<evidence type="ECO:0000269" key="8">
    <source>
    </source>
</evidence>
<evidence type="ECO:0000269" key="9">
    <source>
    </source>
</evidence>
<evidence type="ECO:0000269" key="10">
    <source>
    </source>
</evidence>
<evidence type="ECO:0000269" key="11">
    <source>
    </source>
</evidence>
<evidence type="ECO:0000303" key="12">
    <source>
    </source>
</evidence>
<evidence type="ECO:0000303" key="13">
    <source>
    </source>
</evidence>
<feature type="chain" id="PRO_0000113295" description="B-box zinc finger protein 24">
    <location>
        <begin position="1"/>
        <end position="248"/>
    </location>
</feature>
<feature type="zinc finger region" description="B box-type 1; atypical" evidence="1">
    <location>
        <begin position="5"/>
        <end position="47"/>
    </location>
</feature>
<feature type="zinc finger region" description="B box-type 2; atypical" evidence="1">
    <location>
        <begin position="57"/>
        <end position="99"/>
    </location>
</feature>
<feature type="region of interest" description="Disordered" evidence="2">
    <location>
        <begin position="115"/>
        <end position="148"/>
    </location>
</feature>
<feature type="region of interest" description="Interaction with COP1" evidence="4">
    <location>
        <begin position="236"/>
        <end position="248"/>
    </location>
</feature>
<feature type="short sequence motif" description="Nuclear localization signal" evidence="8">
    <location>
        <begin position="226"/>
        <end position="229"/>
    </location>
</feature>
<feature type="compositionally biased region" description="Polar residues" evidence="2">
    <location>
        <begin position="120"/>
        <end position="130"/>
    </location>
</feature>
<feature type="compositionally biased region" description="Low complexity" evidence="2">
    <location>
        <begin position="131"/>
        <end position="148"/>
    </location>
</feature>
<feature type="binding site" evidence="1">
    <location>
        <position position="5"/>
    </location>
    <ligand>
        <name>Zn(2+)</name>
        <dbReference type="ChEBI" id="CHEBI:29105"/>
        <label>1</label>
    </ligand>
</feature>
<feature type="binding site" evidence="1">
    <location>
        <position position="8"/>
    </location>
    <ligand>
        <name>Zn(2+)</name>
        <dbReference type="ChEBI" id="CHEBI:29105"/>
        <label>1</label>
    </ligand>
</feature>
<feature type="binding site" evidence="1">
    <location>
        <position position="28"/>
    </location>
    <ligand>
        <name>Zn(2+)</name>
        <dbReference type="ChEBI" id="CHEBI:29105"/>
        <label>1</label>
    </ligand>
</feature>
<feature type="binding site" evidence="1">
    <location>
        <position position="33"/>
    </location>
    <ligand>
        <name>Zn(2+)</name>
        <dbReference type="ChEBI" id="CHEBI:29105"/>
        <label>1</label>
    </ligand>
</feature>
<feature type="binding site" evidence="1">
    <location>
        <position position="57"/>
    </location>
    <ligand>
        <name>Zn(2+)</name>
        <dbReference type="ChEBI" id="CHEBI:29105"/>
        <label>2</label>
    </ligand>
</feature>
<feature type="binding site" evidence="1">
    <location>
        <position position="60"/>
    </location>
    <ligand>
        <name>Zn(2+)</name>
        <dbReference type="ChEBI" id="CHEBI:29105"/>
        <label>2</label>
    </ligand>
</feature>
<feature type="binding site" evidence="1">
    <location>
        <position position="80"/>
    </location>
    <ligand>
        <name>Zn(2+)</name>
        <dbReference type="ChEBI" id="CHEBI:29105"/>
        <label>2</label>
    </ligand>
</feature>
<feature type="binding site" evidence="1">
    <location>
        <position position="85"/>
    </location>
    <ligand>
        <name>Zn(2+)</name>
        <dbReference type="ChEBI" id="CHEBI:29105"/>
        <label>2</label>
    </ligand>
</feature>
<feature type="mutagenesis site" description="Prevents nuclear import." evidence="8">
    <original>K</original>
    <variation>N</variation>
    <location>
        <position position="226"/>
    </location>
</feature>
<feature type="mutagenesis site" description="Abolishes interaction with COP1." evidence="8">
    <original>VP</original>
    <variation>AA</variation>
    <location>
        <begin position="244"/>
        <end position="245"/>
    </location>
</feature>
<keyword id="KW-0002">3D-structure</keyword>
<keyword id="KW-0025">Alternative splicing</keyword>
<keyword id="KW-0479">Metal-binding</keyword>
<keyword id="KW-0539">Nucleus</keyword>
<keyword id="KW-1185">Reference proteome</keyword>
<keyword id="KW-0677">Repeat</keyword>
<keyword id="KW-0678">Repressor</keyword>
<keyword id="KW-0804">Transcription</keyword>
<keyword id="KW-0805">Transcription regulation</keyword>
<keyword id="KW-0832">Ubl conjugation</keyword>
<keyword id="KW-0862">Zinc</keyword>
<keyword id="KW-0863">Zinc-finger</keyword>
<gene>
    <name evidence="12" type="primary">BBX24</name>
    <name type="synonym">STO</name>
    <name type="ordered locus">At1g06040</name>
    <name type="ORF">T21E18.8</name>
    <name type="ORF">T21E18.9</name>
</gene>
<reference key="1">
    <citation type="journal article" date="1996" name="J. Biol. Chem.">
        <title>Two classes of plant cDNA clones differentially complement yeast calcineurin mutants and increase salt tolerance of wild-type yeast.</title>
        <authorList>
            <person name="Lippuner V."/>
            <person name="Cyert M.S."/>
            <person name="Gasser C.S."/>
        </authorList>
    </citation>
    <scope>NUCLEOTIDE SEQUENCE [MRNA]</scope>
    <source>
        <tissue>Aerial part</tissue>
    </source>
</reference>
<reference key="2">
    <citation type="journal article" date="2000" name="Nature">
        <title>Sequence and analysis of chromosome 1 of the plant Arabidopsis thaliana.</title>
        <authorList>
            <person name="Theologis A."/>
            <person name="Ecker J.R."/>
            <person name="Palm C.J."/>
            <person name="Federspiel N.A."/>
            <person name="Kaul S."/>
            <person name="White O."/>
            <person name="Alonso J."/>
            <person name="Altafi H."/>
            <person name="Araujo R."/>
            <person name="Bowman C.L."/>
            <person name="Brooks S.Y."/>
            <person name="Buehler E."/>
            <person name="Chan A."/>
            <person name="Chao Q."/>
            <person name="Chen H."/>
            <person name="Cheuk R.F."/>
            <person name="Chin C.W."/>
            <person name="Chung M.K."/>
            <person name="Conn L."/>
            <person name="Conway A.B."/>
            <person name="Conway A.R."/>
            <person name="Creasy T.H."/>
            <person name="Dewar K."/>
            <person name="Dunn P."/>
            <person name="Etgu P."/>
            <person name="Feldblyum T.V."/>
            <person name="Feng J.-D."/>
            <person name="Fong B."/>
            <person name="Fujii C.Y."/>
            <person name="Gill J.E."/>
            <person name="Goldsmith A.D."/>
            <person name="Haas B."/>
            <person name="Hansen N.F."/>
            <person name="Hughes B."/>
            <person name="Huizar L."/>
            <person name="Hunter J.L."/>
            <person name="Jenkins J."/>
            <person name="Johnson-Hopson C."/>
            <person name="Khan S."/>
            <person name="Khaykin E."/>
            <person name="Kim C.J."/>
            <person name="Koo H.L."/>
            <person name="Kremenetskaia I."/>
            <person name="Kurtz D.B."/>
            <person name="Kwan A."/>
            <person name="Lam B."/>
            <person name="Langin-Hooper S."/>
            <person name="Lee A."/>
            <person name="Lee J.M."/>
            <person name="Lenz C.A."/>
            <person name="Li J.H."/>
            <person name="Li Y.-P."/>
            <person name="Lin X."/>
            <person name="Liu S.X."/>
            <person name="Liu Z.A."/>
            <person name="Luros J.S."/>
            <person name="Maiti R."/>
            <person name="Marziali A."/>
            <person name="Militscher J."/>
            <person name="Miranda M."/>
            <person name="Nguyen M."/>
            <person name="Nierman W.C."/>
            <person name="Osborne B.I."/>
            <person name="Pai G."/>
            <person name="Peterson J."/>
            <person name="Pham P.K."/>
            <person name="Rizzo M."/>
            <person name="Rooney T."/>
            <person name="Rowley D."/>
            <person name="Sakano H."/>
            <person name="Salzberg S.L."/>
            <person name="Schwartz J.R."/>
            <person name="Shinn P."/>
            <person name="Southwick A.M."/>
            <person name="Sun H."/>
            <person name="Tallon L.J."/>
            <person name="Tambunga G."/>
            <person name="Toriumi M.J."/>
            <person name="Town C.D."/>
            <person name="Utterback T."/>
            <person name="Van Aken S."/>
            <person name="Vaysberg M."/>
            <person name="Vysotskaia V.S."/>
            <person name="Walker M."/>
            <person name="Wu D."/>
            <person name="Yu G."/>
            <person name="Fraser C.M."/>
            <person name="Venter J.C."/>
            <person name="Davis R.W."/>
        </authorList>
    </citation>
    <scope>NUCLEOTIDE SEQUENCE [LARGE SCALE GENOMIC DNA]</scope>
    <source>
        <strain>cv. Columbia</strain>
    </source>
</reference>
<reference key="3">
    <citation type="journal article" date="2017" name="Plant J.">
        <title>Araport11: a complete reannotation of the Arabidopsis thaliana reference genome.</title>
        <authorList>
            <person name="Cheng C.Y."/>
            <person name="Krishnakumar V."/>
            <person name="Chan A.P."/>
            <person name="Thibaud-Nissen F."/>
            <person name="Schobel S."/>
            <person name="Town C.D."/>
        </authorList>
    </citation>
    <scope>GENOME REANNOTATION</scope>
    <source>
        <strain>cv. Columbia</strain>
    </source>
</reference>
<reference key="4">
    <citation type="journal article" date="2003" name="Science">
        <title>Empirical analysis of transcriptional activity in the Arabidopsis genome.</title>
        <authorList>
            <person name="Yamada K."/>
            <person name="Lim J."/>
            <person name="Dale J.M."/>
            <person name="Chen H."/>
            <person name="Shinn P."/>
            <person name="Palm C.J."/>
            <person name="Southwick A.M."/>
            <person name="Wu H.C."/>
            <person name="Kim C.J."/>
            <person name="Nguyen M."/>
            <person name="Pham P.K."/>
            <person name="Cheuk R.F."/>
            <person name="Karlin-Newmann G."/>
            <person name="Liu S.X."/>
            <person name="Lam B."/>
            <person name="Sakano H."/>
            <person name="Wu T."/>
            <person name="Yu G."/>
            <person name="Miranda M."/>
            <person name="Quach H.L."/>
            <person name="Tripp M."/>
            <person name="Chang C.H."/>
            <person name="Lee J.M."/>
            <person name="Toriumi M.J."/>
            <person name="Chan M.M."/>
            <person name="Tang C.C."/>
            <person name="Onodera C.S."/>
            <person name="Deng J.M."/>
            <person name="Akiyama K."/>
            <person name="Ansari Y."/>
            <person name="Arakawa T."/>
            <person name="Banh J."/>
            <person name="Banno F."/>
            <person name="Bowser L."/>
            <person name="Brooks S.Y."/>
            <person name="Carninci P."/>
            <person name="Chao Q."/>
            <person name="Choy N."/>
            <person name="Enju A."/>
            <person name="Goldsmith A.D."/>
            <person name="Gurjal M."/>
            <person name="Hansen N.F."/>
            <person name="Hayashizaki Y."/>
            <person name="Johnson-Hopson C."/>
            <person name="Hsuan V.W."/>
            <person name="Iida K."/>
            <person name="Karnes M."/>
            <person name="Khan S."/>
            <person name="Koesema E."/>
            <person name="Ishida J."/>
            <person name="Jiang P.X."/>
            <person name="Jones T."/>
            <person name="Kawai J."/>
            <person name="Kamiya A."/>
            <person name="Meyers C."/>
            <person name="Nakajima M."/>
            <person name="Narusaka M."/>
            <person name="Seki M."/>
            <person name="Sakurai T."/>
            <person name="Satou M."/>
            <person name="Tamse R."/>
            <person name="Vaysberg M."/>
            <person name="Wallender E.K."/>
            <person name="Wong C."/>
            <person name="Yamamura Y."/>
            <person name="Yuan S."/>
            <person name="Shinozaki K."/>
            <person name="Davis R.W."/>
            <person name="Theologis A."/>
            <person name="Ecker J.R."/>
        </authorList>
    </citation>
    <scope>NUCLEOTIDE SEQUENCE [LARGE SCALE MRNA]</scope>
    <source>
        <strain>cv. Columbia</strain>
    </source>
</reference>
<reference key="5">
    <citation type="journal article" date="2000" name="FEBS Lett.">
        <title>CEO1, a new protein from Arabidopsis thaliana, protects yeast against oxidative damage.</title>
        <authorList>
            <person name="Belles-Boix E."/>
            <person name="Babiychuk E."/>
            <person name="Van Montagu M."/>
            <person name="Inze D."/>
            <person name="Kushnir S."/>
        </authorList>
    </citation>
    <scope>INTERACTION WITH RCD1</scope>
</reference>
<reference key="6">
    <citation type="journal article" date="2001" name="EMBO J.">
        <title>Identification of a structural motif that confers specific interaction with the WD40 repeat domain of Arabidopsis COP1.</title>
        <authorList>
            <person name="Holm M."/>
            <person name="Hardtke C.S."/>
            <person name="Gaudet R."/>
            <person name="Deng X.-W."/>
        </authorList>
    </citation>
    <scope>INTERACTION WITH COP1</scope>
    <source>
        <tissue>Etiolated seedling</tissue>
    </source>
</reference>
<reference key="7">
    <citation type="journal article" date="2003" name="J. Exp. Bot.">
        <title>Salt tolerance-related protein STO binds to a Myb transcription factor homologue and confers salt tolerance in Arabidopsis.</title>
        <authorList>
            <person name="Nagaoka S."/>
            <person name="Takano T."/>
        </authorList>
    </citation>
    <scope>FUNCTION</scope>
    <scope>SUBCELLULAR LOCATION</scope>
    <scope>INDUCTION</scope>
    <scope>INTERACTION WITH TRP4</scope>
</reference>
<reference key="8">
    <citation type="journal article" date="2007" name="Plant J.">
        <title>Salt tolerance (STO), a stress-related protein, has a major role in light signalling.</title>
        <authorList>
            <person name="Indorf M."/>
            <person name="Cordero J."/>
            <person name="Neuhaus G."/>
            <person name="Rodriguez-Franco M."/>
        </authorList>
    </citation>
    <scope>FUNCTION</scope>
    <scope>SUBCELLULAR LOCATION</scope>
    <scope>INDUCTION</scope>
    <scope>DISRUPTION PHENOTYPE</scope>
</reference>
<reference key="9">
    <citation type="journal article" date="2008" name="Biosci. Biotechnol. Biochem.">
        <title>The common function of a novel subfamily of B-Box zinc finger proteins with reference to circadian-associated events in Arabidopsis thaliana.</title>
        <authorList>
            <person name="Kumagai T."/>
            <person name="Ito S."/>
            <person name="Nakamichi N."/>
            <person name="Niwa Y."/>
            <person name="Murakami M."/>
            <person name="Yamashino T."/>
            <person name="Mizuno T."/>
        </authorList>
    </citation>
    <scope>FUNCTION</scope>
</reference>
<reference key="10">
    <citation type="journal article" date="2009" name="Plant Cell">
        <title>The Arabidopsis B-box zinc finger family.</title>
        <authorList>
            <person name="Khanna R."/>
            <person name="Kronmiller B."/>
            <person name="Maszle D.R."/>
            <person name="Coupland G."/>
            <person name="Holm M."/>
            <person name="Mizuno T."/>
            <person name="Wu S.H."/>
        </authorList>
    </citation>
    <scope>GENE FAMILY</scope>
    <scope>NOMENCLATURE</scope>
</reference>
<reference key="11">
    <citation type="journal article" date="2011" name="Plant Physiol.">
        <title>Nuclear localization and interaction with COP1 are required for STO/BBX24 function during photomorphogenesis.</title>
        <authorList>
            <person name="Yan H."/>
            <person name="Marquardt K."/>
            <person name="Indorf M."/>
            <person name="Jutt D."/>
            <person name="Kircher S."/>
            <person name="Neuhaus G."/>
            <person name="Rodriguez-Franco M."/>
        </authorList>
    </citation>
    <scope>FUNCTION</scope>
    <scope>INTERACTION WITH COP1</scope>
    <scope>SUBCELLULAR LOCATION</scope>
    <scope>MUTAGENESIS OF LYS-226 AND 244-VAL-PRO-245</scope>
</reference>
<reference key="12">
    <citation type="journal article" date="2012" name="Cell Res.">
        <title>Arabidopsis STO/BBX24 negatively regulates UV-B signaling by interacting with COP1 and repressing HY5 transcriptional activity.</title>
        <authorList>
            <person name="Jiang L."/>
            <person name="Wang Y."/>
            <person name="Li Q.F."/>
            <person name="Bjorn L.O."/>
            <person name="He J.X."/>
            <person name="Li S.S."/>
        </authorList>
    </citation>
    <scope>FUNCTION</scope>
    <scope>INTERACTION WITH COP1 AND HY5</scope>
    <scope>DISRUPTION PHENOTYPE</scope>
</reference>
<reference key="13">
    <citation type="journal article" date="2013" name="Plant Cell">
        <title>The Arabidopsis B-BOX protein BBX25 interacts with HY5, negatively regulating BBX22 expression to suppress seedling photomorphogenesis.</title>
        <authorList>
            <person name="Gangappa S.N."/>
            <person name="Crocco C.D."/>
            <person name="Johansson H."/>
            <person name="Datta S."/>
            <person name="Hettiarachchi C."/>
            <person name="Holm M."/>
            <person name="Botto J.F."/>
        </authorList>
    </citation>
    <scope>FUNCTION</scope>
</reference>
<reference key="14">
    <citation type="journal article" date="2013" name="Plant Signal. Behav.">
        <title>Molecular interactions of BBX24 and BBX25 with HYH, HY5 HOMOLOG, to modulate Arabidopsis seedling development.</title>
        <authorList>
            <person name="Gangappa S.N."/>
            <person name="Holm M."/>
            <person name="Botto J.F."/>
        </authorList>
    </citation>
    <scope>INTERACTION WITH HY5 AND HYH</scope>
</reference>
<protein>
    <recommendedName>
        <fullName evidence="12">B-box zinc finger protein 24</fullName>
    </recommendedName>
    <alternativeName>
        <fullName>Salt tolerance protein</fullName>
    </alternativeName>
</protein>
<organism>
    <name type="scientific">Arabidopsis thaliana</name>
    <name type="common">Mouse-ear cress</name>
    <dbReference type="NCBI Taxonomy" id="3702"/>
    <lineage>
        <taxon>Eukaryota</taxon>
        <taxon>Viridiplantae</taxon>
        <taxon>Streptophyta</taxon>
        <taxon>Embryophyta</taxon>
        <taxon>Tracheophyta</taxon>
        <taxon>Spermatophyta</taxon>
        <taxon>Magnoliopsida</taxon>
        <taxon>eudicotyledons</taxon>
        <taxon>Gunneridae</taxon>
        <taxon>Pentapetalae</taxon>
        <taxon>rosids</taxon>
        <taxon>malvids</taxon>
        <taxon>Brassicales</taxon>
        <taxon>Brassicaceae</taxon>
        <taxon>Camelineae</taxon>
        <taxon>Arabidopsis</taxon>
    </lineage>
</organism>
<proteinExistence type="evidence at protein level"/>